<keyword id="KW-1132">Decay of host mRNAs by virus</keyword>
<keyword id="KW-1262">Eukaryotic host gene expression shutoff by virus</keyword>
<keyword id="KW-1035">Host cytoplasm</keyword>
<keyword id="KW-1190">Host gene expression shutoff by virus</keyword>
<keyword id="KW-1192">Host mRNA suppression by virus</keyword>
<keyword id="KW-1048">Host nucleus</keyword>
<keyword id="KW-0945">Host-virus interaction</keyword>
<keyword id="KW-0688">Ribosomal frameshifting</keyword>
<evidence type="ECO:0000250" key="1">
    <source>
        <dbReference type="UniProtKB" id="P0CK64"/>
    </source>
</evidence>
<evidence type="ECO:0000250" key="2">
    <source>
        <dbReference type="UniProtKB" id="P0CK68"/>
    </source>
</evidence>
<evidence type="ECO:0000250" key="3">
    <source>
        <dbReference type="UniProtKB" id="P0DJW8"/>
    </source>
</evidence>
<evidence type="ECO:0000250" key="4">
    <source>
        <dbReference type="UniProtKB" id="P0DXO5"/>
    </source>
</evidence>
<evidence type="ECO:0000305" key="5"/>
<comment type="function">
    <text evidence="1 4">Plays a major role in the shutoff of the host protein expression by cleaving mRNAs probably via an endonuclease activity. This host shutoff allows the virus to escape from the host antiviral response (By similarity). Hijacks host RNA splicing machinery to selectively target host RNAs containing introns for destruction. This may explain the preferential degradation of RNAs that have undergone co- or post-transcriptional processing (By similarity).</text>
</comment>
<comment type="subcellular location">
    <subcellularLocation>
        <location evidence="4">Host cytoplasm</location>
    </subcellularLocation>
    <subcellularLocation>
        <location evidence="4">Host nucleus</location>
    </subcellularLocation>
</comment>
<comment type="alternative products">
    <event type="ribosomal frameshifting"/>
    <isoform>
        <id>P0DJU3-1</id>
        <name>PA-X</name>
        <sequence type="displayed"/>
    </isoform>
    <isoform>
        <id>Q2VC91-1</id>
        <name>PA</name>
        <sequence type="external"/>
    </isoform>
</comment>
<comment type="domain">
    <text evidence="1 4">The probable endonuclease active site in the N-terminus and the basic amino acid cluster in the C-terminus are important for the shutoff activity. The C-terminus acts as a nuclear localization signal (By similarity). The C-terminus is recruited to host protein complexes involved in nuclear Pol II RNA processing (By similarity).</text>
</comment>
<comment type="similarity">
    <text evidence="5">Belongs to the influenza viruses PA-X family.</text>
</comment>
<proteinExistence type="inferred from homology"/>
<name>PAX_I80A2</name>
<organismHost>
    <name type="scientific">Aves</name>
    <dbReference type="NCBI Taxonomy" id="8782"/>
</organismHost>
<organismHost>
    <name type="scientific">Equus caballus</name>
    <name type="common">Horse</name>
    <dbReference type="NCBI Taxonomy" id="9796"/>
</organismHost>
<organismHost>
    <name type="scientific">Homo sapiens</name>
    <name type="common">Human</name>
    <dbReference type="NCBI Taxonomy" id="9606"/>
</organismHost>
<organismHost>
    <name type="scientific">Phocidae</name>
    <name type="common">true seals</name>
    <dbReference type="NCBI Taxonomy" id="9709"/>
</organismHost>
<protein>
    <recommendedName>
        <fullName>Protein PA-X</fullName>
    </recommendedName>
</protein>
<accession>P0DJU3</accession>
<gene>
    <name type="primary">PA</name>
</gene>
<dbReference type="EMBL" id="DQ266099">
    <property type="status" value="NOT_ANNOTATED_CDS"/>
    <property type="molecule type" value="Genomic_RNA"/>
</dbReference>
<dbReference type="SMR" id="P0DJU3"/>
<dbReference type="Proteomes" id="UP000008576">
    <property type="component" value="Genome"/>
</dbReference>
<dbReference type="GO" id="GO:0003723">
    <property type="term" value="F:RNA binding"/>
    <property type="evidence" value="ECO:0007669"/>
    <property type="project" value="InterPro"/>
</dbReference>
<dbReference type="GO" id="GO:0039694">
    <property type="term" value="P:viral RNA genome replication"/>
    <property type="evidence" value="ECO:0007669"/>
    <property type="project" value="InterPro"/>
</dbReference>
<dbReference type="GO" id="GO:0075523">
    <property type="term" value="P:viral translational frameshifting"/>
    <property type="evidence" value="ECO:0007669"/>
    <property type="project" value="UniProtKB-KW"/>
</dbReference>
<dbReference type="FunFam" id="3.40.91.90:FF:000001">
    <property type="entry name" value="Polymerase acidic protein"/>
    <property type="match status" value="1"/>
</dbReference>
<dbReference type="Gene3D" id="3.40.91.90">
    <property type="entry name" value="Influenza RNA-dependent RNA polymerase subunit PA, endonuclease domain"/>
    <property type="match status" value="1"/>
</dbReference>
<dbReference type="InterPro" id="IPR001009">
    <property type="entry name" value="PA/PA-X"/>
</dbReference>
<dbReference type="InterPro" id="IPR038372">
    <property type="entry name" value="PA/PA-X_sf"/>
</dbReference>
<dbReference type="Pfam" id="PF00603">
    <property type="entry name" value="Flu_PA"/>
    <property type="match status" value="1"/>
</dbReference>
<reference key="1">
    <citation type="journal article" date="2005" name="Proc. Natl. Acad. Sci. U.S.A.">
        <title>The viral polymerase mediates adaptation of an avian influenza virus to a mammalian host.</title>
        <authorList>
            <person name="Gabriel G."/>
            <person name="Dauber B."/>
            <person name="Wolff T."/>
            <person name="Planz O."/>
            <person name="Klenk H.D."/>
            <person name="Stech J."/>
        </authorList>
    </citation>
    <scope>NUCLEOTIDE SEQUENCE [GENOMIC RNA]</scope>
    <source>
        <strain>SC35M mouse-adapted</strain>
    </source>
</reference>
<sequence length="252" mass="29385">MEDFVRQCFNPMIVELAEKAMKEYGEDPKIETNKFAAICTHLEVCFMYSDFHFVDERGESIIVESGDPNALLKHRFEIIEGRDRTMAWTVVNSICNTTGIEKPKFLPDLYDYKENRFIEIGVTRREVHIYYLEKANKIKSEKTHIHIFSFTGEEMATKADYTLDEESRARIKTRLFTIRQEMASRGLWDSFVNPREAKRQLKKDLKLQEPCAGSPTKVSHRTSPALKTLEPMWMDSNRTAALRASFLKCPRK</sequence>
<organism>
    <name type="scientific">Influenza A virus (strain A/Seal/Massachusetts/1/1980 H7N7)</name>
    <dbReference type="NCBI Taxonomy" id="384493"/>
    <lineage>
        <taxon>Viruses</taxon>
        <taxon>Riboviria</taxon>
        <taxon>Orthornavirae</taxon>
        <taxon>Negarnaviricota</taxon>
        <taxon>Polyploviricotina</taxon>
        <taxon>Insthoviricetes</taxon>
        <taxon>Articulavirales</taxon>
        <taxon>Orthomyxoviridae</taxon>
        <taxon>Alphainfluenzavirus</taxon>
        <taxon>Alphainfluenzavirus influenzae</taxon>
        <taxon>Influenza A virus</taxon>
    </lineage>
</organism>
<feature type="chain" id="PRO_0000419406" description="Protein PA-X">
    <location>
        <begin position="1"/>
        <end position="252"/>
    </location>
</feature>
<feature type="active site" evidence="2">
    <location>
        <position position="80"/>
    </location>
</feature>
<feature type="active site" evidence="2">
    <location>
        <position position="108"/>
    </location>
</feature>
<feature type="site" description="Important for efficient shutoff activity and nuclear localization" evidence="4">
    <location>
        <position position="195"/>
    </location>
</feature>
<feature type="site" description="Important for efficient shutoff activity and nuclear localization" evidence="4">
    <location>
        <position position="198"/>
    </location>
</feature>
<feature type="site" description="Important for efficient shutoff activity and nuclear localization" evidence="4">
    <location>
        <position position="199"/>
    </location>
</feature>
<feature type="site" description="Important for efficient shutoff activity" evidence="3">
    <location>
        <position position="202"/>
    </location>
</feature>
<feature type="site" description="Important for efficient shutoff activity" evidence="3">
    <location>
        <position position="203"/>
    </location>
</feature>
<feature type="site" description="Important for efficient shutoff activity" evidence="3">
    <location>
        <position position="206"/>
    </location>
</feature>